<accession>B2HGY2</accession>
<evidence type="ECO:0000255" key="1">
    <source>
        <dbReference type="HAMAP-Rule" id="MF_00181"/>
    </source>
</evidence>
<sequence>MTAESGDQIPTVHVATSLPKRGVSSSVLIVPVVSTGDDEQSGERPGAVVASAEPFLSADAIAEIEAGLRALDATGASDQVHRLVVSSLPVSSVLTVGLGKPRYEWTPDAVRRAAGAAARALGTAKTVVTTLADLPGDGVCAAAIEGLILGSYRFSAFRSAKTAPKDAGLHKVTVLTTAKDARKHCAHGAAVATAVATARDLVNTPPSHLYPAELARRAKVLGESVGLEVQVLDEKALQKAGYGGLVGVGQGSSRPPRLVRLTHRGSRLAKNPRRAKKVALVGKGVTFDTGGISIKPAASMHYMTSDMGGAAAVIATVALAAQLELPIDVIATVPIAENMPSATAQRPGDVLTQYGGTTVEVLNTDAEGRLILADAIVRACEDNPDYLIETSTLTGAQTVALGARIPGVMGSDEFRDRVAAISQQVGENGWPMPLPDELKDDLKSTVADLANVSGQRFAGMLVAGVFLREFVADAVDWAHIDVAGPAYNTGSAWGYTPKGATGVPTRTMFAVLEDIAANG</sequence>
<keyword id="KW-0031">Aminopeptidase</keyword>
<keyword id="KW-0963">Cytoplasm</keyword>
<keyword id="KW-0378">Hydrolase</keyword>
<keyword id="KW-0464">Manganese</keyword>
<keyword id="KW-0479">Metal-binding</keyword>
<keyword id="KW-0645">Protease</keyword>
<keyword id="KW-1185">Reference proteome</keyword>
<gene>
    <name evidence="1" type="primary">pepA</name>
    <name type="ordered locus">MMAR_3258</name>
</gene>
<proteinExistence type="inferred from homology"/>
<comment type="function">
    <text evidence="1">Presumably involved in the processing and regular turnover of intracellular proteins. Catalyzes the removal of unsubstituted N-terminal amino acids from various peptides.</text>
</comment>
<comment type="catalytic activity">
    <reaction evidence="1">
        <text>Release of an N-terminal amino acid, Xaa-|-Yaa-, in which Xaa is preferably Leu, but may be other amino acids including Pro although not Arg or Lys, and Yaa may be Pro. Amino acid amides and methyl esters are also readily hydrolyzed, but rates on arylamides are exceedingly low.</text>
        <dbReference type="EC" id="3.4.11.1"/>
    </reaction>
</comment>
<comment type="catalytic activity">
    <reaction evidence="1">
        <text>Release of an N-terminal amino acid, preferentially leucine, but not glutamic or aspartic acids.</text>
        <dbReference type="EC" id="3.4.11.10"/>
    </reaction>
</comment>
<comment type="cofactor">
    <cofactor evidence="1">
        <name>Mn(2+)</name>
        <dbReference type="ChEBI" id="CHEBI:29035"/>
    </cofactor>
    <text evidence="1">Binds 2 manganese ions per subunit.</text>
</comment>
<comment type="subcellular location">
    <subcellularLocation>
        <location evidence="1">Cytoplasm</location>
    </subcellularLocation>
</comment>
<comment type="similarity">
    <text evidence="1">Belongs to the peptidase M17 family.</text>
</comment>
<reference key="1">
    <citation type="journal article" date="2008" name="Genome Res.">
        <title>Insights from the complete genome sequence of Mycobacterium marinum on the evolution of Mycobacterium tuberculosis.</title>
        <authorList>
            <person name="Stinear T.P."/>
            <person name="Seemann T."/>
            <person name="Harrison P.F."/>
            <person name="Jenkin G.A."/>
            <person name="Davies J.K."/>
            <person name="Johnson P.D."/>
            <person name="Abdellah Z."/>
            <person name="Arrowsmith C."/>
            <person name="Chillingworth T."/>
            <person name="Churcher C."/>
            <person name="Clarke K."/>
            <person name="Cronin A."/>
            <person name="Davis P."/>
            <person name="Goodhead I."/>
            <person name="Holroyd N."/>
            <person name="Jagels K."/>
            <person name="Lord A."/>
            <person name="Moule S."/>
            <person name="Mungall K."/>
            <person name="Norbertczak H."/>
            <person name="Quail M.A."/>
            <person name="Rabbinowitsch E."/>
            <person name="Walker D."/>
            <person name="White B."/>
            <person name="Whitehead S."/>
            <person name="Small P.L."/>
            <person name="Brosch R."/>
            <person name="Ramakrishnan L."/>
            <person name="Fischbach M.A."/>
            <person name="Parkhill J."/>
            <person name="Cole S.T."/>
        </authorList>
    </citation>
    <scope>NUCLEOTIDE SEQUENCE [LARGE SCALE GENOMIC DNA]</scope>
    <source>
        <strain>ATCC BAA-535 / M</strain>
    </source>
</reference>
<dbReference type="EC" id="3.4.11.1" evidence="1"/>
<dbReference type="EC" id="3.4.11.10" evidence="1"/>
<dbReference type="EMBL" id="CP000854">
    <property type="protein sequence ID" value="ACC41685.1"/>
    <property type="molecule type" value="Genomic_DNA"/>
</dbReference>
<dbReference type="RefSeq" id="WP_012394915.1">
    <property type="nucleotide sequence ID" value="NC_010612.1"/>
</dbReference>
<dbReference type="SMR" id="B2HGY2"/>
<dbReference type="STRING" id="216594.MMAR_3258"/>
<dbReference type="KEGG" id="mmi:MMAR_3258"/>
<dbReference type="eggNOG" id="COG0260">
    <property type="taxonomic scope" value="Bacteria"/>
</dbReference>
<dbReference type="HOGENOM" id="CLU_013734_2_2_11"/>
<dbReference type="Proteomes" id="UP000001190">
    <property type="component" value="Chromosome"/>
</dbReference>
<dbReference type="GO" id="GO:0005737">
    <property type="term" value="C:cytoplasm"/>
    <property type="evidence" value="ECO:0007669"/>
    <property type="project" value="UniProtKB-SubCell"/>
</dbReference>
<dbReference type="GO" id="GO:0030145">
    <property type="term" value="F:manganese ion binding"/>
    <property type="evidence" value="ECO:0007669"/>
    <property type="project" value="UniProtKB-UniRule"/>
</dbReference>
<dbReference type="GO" id="GO:0070006">
    <property type="term" value="F:metalloaminopeptidase activity"/>
    <property type="evidence" value="ECO:0007669"/>
    <property type="project" value="InterPro"/>
</dbReference>
<dbReference type="GO" id="GO:0006508">
    <property type="term" value="P:proteolysis"/>
    <property type="evidence" value="ECO:0007669"/>
    <property type="project" value="UniProtKB-KW"/>
</dbReference>
<dbReference type="CDD" id="cd00433">
    <property type="entry name" value="Peptidase_M17"/>
    <property type="match status" value="1"/>
</dbReference>
<dbReference type="FunFam" id="3.40.630.10:FF:000087">
    <property type="entry name" value="Probable cytosol aminopeptidase"/>
    <property type="match status" value="1"/>
</dbReference>
<dbReference type="Gene3D" id="3.40.220.10">
    <property type="entry name" value="Leucine Aminopeptidase, subunit E, domain 1"/>
    <property type="match status" value="1"/>
</dbReference>
<dbReference type="Gene3D" id="3.40.630.10">
    <property type="entry name" value="Zn peptidases"/>
    <property type="match status" value="1"/>
</dbReference>
<dbReference type="HAMAP" id="MF_00181">
    <property type="entry name" value="Cytosol_peptidase_M17"/>
    <property type="match status" value="1"/>
</dbReference>
<dbReference type="InterPro" id="IPR011356">
    <property type="entry name" value="Leucine_aapep/pepB"/>
</dbReference>
<dbReference type="InterPro" id="IPR043472">
    <property type="entry name" value="Macro_dom-like"/>
</dbReference>
<dbReference type="InterPro" id="IPR000819">
    <property type="entry name" value="Peptidase_M17_C"/>
</dbReference>
<dbReference type="InterPro" id="IPR023042">
    <property type="entry name" value="Peptidase_M17_leu_NH2_pept"/>
</dbReference>
<dbReference type="InterPro" id="IPR008283">
    <property type="entry name" value="Peptidase_M17_N"/>
</dbReference>
<dbReference type="NCBIfam" id="NF002073">
    <property type="entry name" value="PRK00913.1-2"/>
    <property type="match status" value="1"/>
</dbReference>
<dbReference type="PANTHER" id="PTHR11963:SF23">
    <property type="entry name" value="CYTOSOL AMINOPEPTIDASE"/>
    <property type="match status" value="1"/>
</dbReference>
<dbReference type="PANTHER" id="PTHR11963">
    <property type="entry name" value="LEUCINE AMINOPEPTIDASE-RELATED"/>
    <property type="match status" value="1"/>
</dbReference>
<dbReference type="Pfam" id="PF00883">
    <property type="entry name" value="Peptidase_M17"/>
    <property type="match status" value="1"/>
</dbReference>
<dbReference type="Pfam" id="PF02789">
    <property type="entry name" value="Peptidase_M17_N"/>
    <property type="match status" value="1"/>
</dbReference>
<dbReference type="PRINTS" id="PR00481">
    <property type="entry name" value="LAMNOPPTDASE"/>
</dbReference>
<dbReference type="SUPFAM" id="SSF52949">
    <property type="entry name" value="Macro domain-like"/>
    <property type="match status" value="1"/>
</dbReference>
<dbReference type="SUPFAM" id="SSF53187">
    <property type="entry name" value="Zn-dependent exopeptidases"/>
    <property type="match status" value="1"/>
</dbReference>
<dbReference type="PROSITE" id="PS00631">
    <property type="entry name" value="CYTOSOL_AP"/>
    <property type="match status" value="1"/>
</dbReference>
<name>AMPA_MYCMM</name>
<protein>
    <recommendedName>
        <fullName evidence="1">Probable cytosol aminopeptidase</fullName>
        <ecNumber evidence="1">3.4.11.1</ecNumber>
    </recommendedName>
    <alternativeName>
        <fullName evidence="1">Leucine aminopeptidase</fullName>
        <shortName evidence="1">LAP</shortName>
        <ecNumber evidence="1">3.4.11.10</ecNumber>
    </alternativeName>
    <alternativeName>
        <fullName evidence="1">Leucyl aminopeptidase</fullName>
    </alternativeName>
</protein>
<organism>
    <name type="scientific">Mycobacterium marinum (strain ATCC BAA-535 / M)</name>
    <dbReference type="NCBI Taxonomy" id="216594"/>
    <lineage>
        <taxon>Bacteria</taxon>
        <taxon>Bacillati</taxon>
        <taxon>Actinomycetota</taxon>
        <taxon>Actinomycetes</taxon>
        <taxon>Mycobacteriales</taxon>
        <taxon>Mycobacteriaceae</taxon>
        <taxon>Mycobacterium</taxon>
        <taxon>Mycobacterium ulcerans group</taxon>
    </lineage>
</organism>
<feature type="chain" id="PRO_1000098331" description="Probable cytosol aminopeptidase">
    <location>
        <begin position="1"/>
        <end position="519"/>
    </location>
</feature>
<feature type="active site" evidence="1">
    <location>
        <position position="295"/>
    </location>
</feature>
<feature type="active site" evidence="1">
    <location>
        <position position="369"/>
    </location>
</feature>
<feature type="binding site" evidence="1">
    <location>
        <position position="283"/>
    </location>
    <ligand>
        <name>Mn(2+)</name>
        <dbReference type="ChEBI" id="CHEBI:29035"/>
        <label>2</label>
    </ligand>
</feature>
<feature type="binding site" evidence="1">
    <location>
        <position position="288"/>
    </location>
    <ligand>
        <name>Mn(2+)</name>
        <dbReference type="ChEBI" id="CHEBI:29035"/>
        <label>1</label>
    </ligand>
</feature>
<feature type="binding site" evidence="1">
    <location>
        <position position="288"/>
    </location>
    <ligand>
        <name>Mn(2+)</name>
        <dbReference type="ChEBI" id="CHEBI:29035"/>
        <label>2</label>
    </ligand>
</feature>
<feature type="binding site" evidence="1">
    <location>
        <position position="306"/>
    </location>
    <ligand>
        <name>Mn(2+)</name>
        <dbReference type="ChEBI" id="CHEBI:29035"/>
        <label>2</label>
    </ligand>
</feature>
<feature type="binding site" evidence="1">
    <location>
        <position position="365"/>
    </location>
    <ligand>
        <name>Mn(2+)</name>
        <dbReference type="ChEBI" id="CHEBI:29035"/>
        <label>1</label>
    </ligand>
</feature>
<feature type="binding site" evidence="1">
    <location>
        <position position="367"/>
    </location>
    <ligand>
        <name>Mn(2+)</name>
        <dbReference type="ChEBI" id="CHEBI:29035"/>
        <label>1</label>
    </ligand>
</feature>
<feature type="binding site" evidence="1">
    <location>
        <position position="367"/>
    </location>
    <ligand>
        <name>Mn(2+)</name>
        <dbReference type="ChEBI" id="CHEBI:29035"/>
        <label>2</label>
    </ligand>
</feature>